<comment type="subcellular location">
    <subcellularLocation>
        <location evidence="1">Spore core</location>
    </subcellularLocation>
</comment>
<comment type="induction">
    <text evidence="1">Expressed only in the forespore compartment of sporulating cells.</text>
</comment>
<comment type="similarity">
    <text evidence="1">Belongs to the SspN family.</text>
</comment>
<name>SSPN_BACP2</name>
<keyword id="KW-0749">Sporulation</keyword>
<accession>A8FDR3</accession>
<proteinExistence type="inferred from homology"/>
<evidence type="ECO:0000255" key="1">
    <source>
        <dbReference type="HAMAP-Rule" id="MF_01505"/>
    </source>
</evidence>
<evidence type="ECO:0000256" key="2">
    <source>
        <dbReference type="SAM" id="MobiDB-lite"/>
    </source>
</evidence>
<feature type="chain" id="PRO_0000315205" description="Small, acid-soluble spore protein N">
    <location>
        <begin position="1"/>
        <end position="48"/>
    </location>
</feature>
<feature type="region of interest" description="Disordered" evidence="2">
    <location>
        <begin position="1"/>
        <end position="48"/>
    </location>
</feature>
<feature type="compositionally biased region" description="Basic residues" evidence="2">
    <location>
        <begin position="23"/>
        <end position="34"/>
    </location>
</feature>
<reference key="1">
    <citation type="journal article" date="2007" name="PLoS ONE">
        <title>Paradoxical DNA repair and peroxide resistance gene conservation in Bacillus pumilus SAFR-032.</title>
        <authorList>
            <person name="Gioia J."/>
            <person name="Yerrapragada S."/>
            <person name="Qin X."/>
            <person name="Jiang H."/>
            <person name="Igboeli O.C."/>
            <person name="Muzny D."/>
            <person name="Dugan-Rocha S."/>
            <person name="Ding Y."/>
            <person name="Hawes A."/>
            <person name="Liu W."/>
            <person name="Perez L."/>
            <person name="Kovar C."/>
            <person name="Dinh H."/>
            <person name="Lee S."/>
            <person name="Nazareth L."/>
            <person name="Blyth P."/>
            <person name="Holder M."/>
            <person name="Buhay C."/>
            <person name="Tirumalai M.R."/>
            <person name="Liu Y."/>
            <person name="Dasgupta I."/>
            <person name="Bokhetache L."/>
            <person name="Fujita M."/>
            <person name="Karouia F."/>
            <person name="Eswara Moorthy P."/>
            <person name="Siefert J."/>
            <person name="Uzman A."/>
            <person name="Buzumbo P."/>
            <person name="Verma A."/>
            <person name="Zwiya H."/>
            <person name="McWilliams B.D."/>
            <person name="Olowu A."/>
            <person name="Clinkenbeard K.D."/>
            <person name="Newcombe D."/>
            <person name="Golebiewski L."/>
            <person name="Petrosino J.F."/>
            <person name="Nicholson W.L."/>
            <person name="Fox G.E."/>
            <person name="Venkateswaran K."/>
            <person name="Highlander S.K."/>
            <person name="Weinstock G.M."/>
        </authorList>
    </citation>
    <scope>NUCLEOTIDE SEQUENCE [LARGE SCALE GENOMIC DNA]</scope>
    <source>
        <strain>SAFR-032</strain>
    </source>
</reference>
<sequence length="48" mass="5535">MMGREHDKQAQFTPDHLGTKPVAYKRNKGKKMHNKSNEQPDVIQTKGE</sequence>
<gene>
    <name evidence="1" type="primary">sspN</name>
    <name type="ordered locus">BPUM_1702</name>
</gene>
<organism>
    <name type="scientific">Bacillus pumilus (strain SAFR-032)</name>
    <dbReference type="NCBI Taxonomy" id="315750"/>
    <lineage>
        <taxon>Bacteria</taxon>
        <taxon>Bacillati</taxon>
        <taxon>Bacillota</taxon>
        <taxon>Bacilli</taxon>
        <taxon>Bacillales</taxon>
        <taxon>Bacillaceae</taxon>
        <taxon>Bacillus</taxon>
    </lineage>
</organism>
<dbReference type="EMBL" id="CP000813">
    <property type="protein sequence ID" value="ABV62380.1"/>
    <property type="molecule type" value="Genomic_DNA"/>
</dbReference>
<dbReference type="STRING" id="315750.BPUM_1702"/>
<dbReference type="KEGG" id="bpu:BPUM_1702"/>
<dbReference type="HOGENOM" id="CLU_216714_0_0_9"/>
<dbReference type="OrthoDB" id="2455637at2"/>
<dbReference type="Proteomes" id="UP000001355">
    <property type="component" value="Chromosome"/>
</dbReference>
<dbReference type="GO" id="GO:0042601">
    <property type="term" value="C:endospore-forming forespore"/>
    <property type="evidence" value="ECO:0007669"/>
    <property type="project" value="InterPro"/>
</dbReference>
<dbReference type="GO" id="GO:0030436">
    <property type="term" value="P:asexual sporulation"/>
    <property type="evidence" value="ECO:0007669"/>
    <property type="project" value="UniProtKB-UniRule"/>
</dbReference>
<dbReference type="GO" id="GO:0030435">
    <property type="term" value="P:sporulation resulting in formation of a cellular spore"/>
    <property type="evidence" value="ECO:0007669"/>
    <property type="project" value="UniProtKB-KW"/>
</dbReference>
<dbReference type="HAMAP" id="MF_01505">
    <property type="entry name" value="SspN"/>
    <property type="match status" value="1"/>
</dbReference>
<dbReference type="InterPro" id="IPR012612">
    <property type="entry name" value="SASP_SspN"/>
</dbReference>
<dbReference type="NCBIfam" id="NF006904">
    <property type="entry name" value="PRK09398.1"/>
    <property type="match status" value="1"/>
</dbReference>
<dbReference type="Pfam" id="PF08177">
    <property type="entry name" value="SspN"/>
    <property type="match status" value="1"/>
</dbReference>
<protein>
    <recommendedName>
        <fullName evidence="1">Small, acid-soluble spore protein N</fullName>
        <shortName evidence="1">SASP N</shortName>
    </recommendedName>
</protein>